<keyword id="KW-0436">Ligase</keyword>
<keyword id="KW-0597">Phosphoprotein</keyword>
<keyword id="KW-0662">Pyridine nucleotide biosynthesis</keyword>
<sequence length="400" mass="45897">MTQFASPVLHSLLDTDAYKLHMQQAVFHHYYDVHVAAEFRCRGDDLLGIYADAIREQVQAMQHLRLQDDEYQWLSALPFFKADYLNWLREFRFNPEQVTVSNDNGKLDIRLSGPWREVILWEVPLLAVISEMVHRYRSPQADVAQALDTLESKLVDFSALTAGLDMSRFHLMDFGTRRRFSREVQETIVKRLQQESWFVGTSNYDLARRLSLTPMGTQAHEWFQAHQQISPDLANSQRAALAAWLEEYPDQLGIALTDCITMDAFLRDFGVEFASRYQGLRHDSGDPVEWGEKAIAHYEKLGIDPQSKTLVFSDNLDLRKAVELYRHFSSRVQLSFGIGTRLTCDIPQVKPLNIVIKLVECNGKPVAKLSDSPGKTICHDKAFVRALRKAFDLPHIKKAS</sequence>
<name>PNCB_ECODH</name>
<organism>
    <name type="scientific">Escherichia coli (strain K12 / DH10B)</name>
    <dbReference type="NCBI Taxonomy" id="316385"/>
    <lineage>
        <taxon>Bacteria</taxon>
        <taxon>Pseudomonadati</taxon>
        <taxon>Pseudomonadota</taxon>
        <taxon>Gammaproteobacteria</taxon>
        <taxon>Enterobacterales</taxon>
        <taxon>Enterobacteriaceae</taxon>
        <taxon>Escherichia</taxon>
    </lineage>
</organism>
<proteinExistence type="inferred from homology"/>
<comment type="function">
    <text evidence="1">Catalyzes the synthesis of beta-nicotinate D-ribonucleotide from nicotinate and 5-phospho-D-ribose 1-phosphate at the expense of ATP.</text>
</comment>
<comment type="catalytic activity">
    <reaction evidence="1">
        <text>nicotinate + 5-phospho-alpha-D-ribose 1-diphosphate + ATP + H2O = nicotinate beta-D-ribonucleotide + ADP + phosphate + diphosphate</text>
        <dbReference type="Rhea" id="RHEA:36163"/>
        <dbReference type="ChEBI" id="CHEBI:15377"/>
        <dbReference type="ChEBI" id="CHEBI:30616"/>
        <dbReference type="ChEBI" id="CHEBI:32544"/>
        <dbReference type="ChEBI" id="CHEBI:33019"/>
        <dbReference type="ChEBI" id="CHEBI:43474"/>
        <dbReference type="ChEBI" id="CHEBI:57502"/>
        <dbReference type="ChEBI" id="CHEBI:58017"/>
        <dbReference type="ChEBI" id="CHEBI:456216"/>
        <dbReference type="EC" id="6.3.4.21"/>
    </reaction>
</comment>
<comment type="pathway">
    <text evidence="1">Cofactor biosynthesis; NAD(+) biosynthesis; nicotinate D-ribonucleotide from nicotinate: step 1/1.</text>
</comment>
<comment type="PTM">
    <text evidence="1">Transiently phosphorylated on a His residue during the reaction cycle. Phosphorylation strongly increases the affinity for substrates and increases the rate of nicotinate D-ribonucleotide production. Dephosphorylation regenerates the low-affinity form of the enzyme, leading to product release.</text>
</comment>
<comment type="similarity">
    <text evidence="1">Belongs to the NAPRTase family.</text>
</comment>
<protein>
    <recommendedName>
        <fullName evidence="1">Nicotinate phosphoribosyltransferase</fullName>
        <shortName evidence="1">NAPRTase</shortName>
        <ecNumber evidence="1">6.3.4.21</ecNumber>
    </recommendedName>
</protein>
<reference key="1">
    <citation type="journal article" date="2008" name="J. Bacteriol.">
        <title>The complete genome sequence of Escherichia coli DH10B: insights into the biology of a laboratory workhorse.</title>
        <authorList>
            <person name="Durfee T."/>
            <person name="Nelson R."/>
            <person name="Baldwin S."/>
            <person name="Plunkett G. III"/>
            <person name="Burland V."/>
            <person name="Mau B."/>
            <person name="Petrosino J.F."/>
            <person name="Qin X."/>
            <person name="Muzny D.M."/>
            <person name="Ayele M."/>
            <person name="Gibbs R.A."/>
            <person name="Csorgo B."/>
            <person name="Posfai G."/>
            <person name="Weinstock G.M."/>
            <person name="Blattner F.R."/>
        </authorList>
    </citation>
    <scope>NUCLEOTIDE SEQUENCE [LARGE SCALE GENOMIC DNA]</scope>
    <source>
        <strain>K12 / DH10B</strain>
    </source>
</reference>
<dbReference type="EC" id="6.3.4.21" evidence="1"/>
<dbReference type="EMBL" id="CP000948">
    <property type="protein sequence ID" value="ACB02131.1"/>
    <property type="molecule type" value="Genomic_DNA"/>
</dbReference>
<dbReference type="RefSeq" id="WP_001307697.1">
    <property type="nucleotide sequence ID" value="NC_010473.1"/>
</dbReference>
<dbReference type="SMR" id="B1X8N5"/>
<dbReference type="GeneID" id="75171005"/>
<dbReference type="KEGG" id="ecd:ECDH10B_1001"/>
<dbReference type="HOGENOM" id="CLU_030991_1_0_6"/>
<dbReference type="UniPathway" id="UPA00253">
    <property type="reaction ID" value="UER00457"/>
</dbReference>
<dbReference type="GO" id="GO:0005829">
    <property type="term" value="C:cytosol"/>
    <property type="evidence" value="ECO:0007669"/>
    <property type="project" value="TreeGrafter"/>
</dbReference>
<dbReference type="GO" id="GO:0004516">
    <property type="term" value="F:nicotinate phosphoribosyltransferase activity"/>
    <property type="evidence" value="ECO:0007669"/>
    <property type="project" value="UniProtKB-UniRule"/>
</dbReference>
<dbReference type="GO" id="GO:0034355">
    <property type="term" value="P:NAD biosynthetic process via the salvage pathway"/>
    <property type="evidence" value="ECO:0007669"/>
    <property type="project" value="TreeGrafter"/>
</dbReference>
<dbReference type="CDD" id="cd01401">
    <property type="entry name" value="PncB_like"/>
    <property type="match status" value="1"/>
</dbReference>
<dbReference type="FunFam" id="3.20.140.10:FF:000001">
    <property type="entry name" value="Nicotinate phosphoribosyltransferase"/>
    <property type="match status" value="1"/>
</dbReference>
<dbReference type="Gene3D" id="3.20.140.10">
    <property type="entry name" value="nicotinate phosphoribosyltransferase"/>
    <property type="match status" value="1"/>
</dbReference>
<dbReference type="HAMAP" id="MF_00570">
    <property type="entry name" value="NAPRTase"/>
    <property type="match status" value="1"/>
</dbReference>
<dbReference type="InterPro" id="IPR041525">
    <property type="entry name" value="N/Namide_PRibTrfase"/>
</dbReference>
<dbReference type="InterPro" id="IPR040727">
    <property type="entry name" value="NAPRTase_N"/>
</dbReference>
<dbReference type="InterPro" id="IPR006406">
    <property type="entry name" value="Nic_PRibTrfase"/>
</dbReference>
<dbReference type="InterPro" id="IPR007229">
    <property type="entry name" value="Nic_PRibTrfase-Fam"/>
</dbReference>
<dbReference type="InterPro" id="IPR036068">
    <property type="entry name" value="Nicotinate_pribotase-like_C"/>
</dbReference>
<dbReference type="NCBIfam" id="TIGR01514">
    <property type="entry name" value="NAPRTase"/>
    <property type="match status" value="1"/>
</dbReference>
<dbReference type="NCBIfam" id="NF003704">
    <property type="entry name" value="PRK05321.1"/>
    <property type="match status" value="1"/>
</dbReference>
<dbReference type="PANTHER" id="PTHR11098">
    <property type="entry name" value="NICOTINATE PHOSPHORIBOSYLTRANSFERASE"/>
    <property type="match status" value="1"/>
</dbReference>
<dbReference type="PANTHER" id="PTHR11098:SF1">
    <property type="entry name" value="NICOTINATE PHOSPHORIBOSYLTRANSFERASE"/>
    <property type="match status" value="1"/>
</dbReference>
<dbReference type="Pfam" id="PF04095">
    <property type="entry name" value="NAPRTase"/>
    <property type="match status" value="1"/>
</dbReference>
<dbReference type="Pfam" id="PF17767">
    <property type="entry name" value="NAPRTase_N"/>
    <property type="match status" value="1"/>
</dbReference>
<dbReference type="PIRSF" id="PIRSF000484">
    <property type="entry name" value="NAPRT"/>
    <property type="match status" value="1"/>
</dbReference>
<dbReference type="SUPFAM" id="SSF51690">
    <property type="entry name" value="Nicotinate/Quinolinate PRTase C-terminal domain-like"/>
    <property type="match status" value="1"/>
</dbReference>
<dbReference type="SUPFAM" id="SSF54675">
    <property type="entry name" value="Nicotinate/Quinolinate PRTase N-terminal domain-like"/>
    <property type="match status" value="1"/>
</dbReference>
<evidence type="ECO:0000255" key="1">
    <source>
        <dbReference type="HAMAP-Rule" id="MF_00570"/>
    </source>
</evidence>
<accession>B1X8N5</accession>
<feature type="chain" id="PRO_1000129469" description="Nicotinate phosphoribosyltransferase">
    <location>
        <begin position="1"/>
        <end position="400"/>
    </location>
</feature>
<feature type="modified residue" description="Phosphohistidine; by autocatalysis" evidence="1">
    <location>
        <position position="220"/>
    </location>
</feature>
<gene>
    <name evidence="1" type="primary">pncB</name>
    <name type="ordered locus">ECDH10B_1001</name>
</gene>